<comment type="function">
    <text evidence="1">Catalyzes the conversion of 3-deoxy-D-arabino-heptulosonate 7-phosphate (DAHP) to dehydroquinate (DHQ).</text>
</comment>
<comment type="catalytic activity">
    <reaction evidence="1">
        <text>7-phospho-2-dehydro-3-deoxy-D-arabino-heptonate = 3-dehydroquinate + phosphate</text>
        <dbReference type="Rhea" id="RHEA:21968"/>
        <dbReference type="ChEBI" id="CHEBI:32364"/>
        <dbReference type="ChEBI" id="CHEBI:43474"/>
        <dbReference type="ChEBI" id="CHEBI:58394"/>
        <dbReference type="EC" id="4.2.3.4"/>
    </reaction>
</comment>
<comment type="cofactor">
    <cofactor evidence="1">
        <name>Co(2+)</name>
        <dbReference type="ChEBI" id="CHEBI:48828"/>
    </cofactor>
    <cofactor evidence="1">
        <name>Zn(2+)</name>
        <dbReference type="ChEBI" id="CHEBI:29105"/>
    </cofactor>
    <text evidence="1">Binds 1 divalent metal cation per subunit. Can use either Co(2+) or Zn(2+).</text>
</comment>
<comment type="cofactor">
    <cofactor evidence="1">
        <name>NAD(+)</name>
        <dbReference type="ChEBI" id="CHEBI:57540"/>
    </cofactor>
</comment>
<comment type="pathway">
    <text evidence="1">Metabolic intermediate biosynthesis; chorismate biosynthesis; chorismate from D-erythrose 4-phosphate and phosphoenolpyruvate: step 2/7.</text>
</comment>
<comment type="subcellular location">
    <subcellularLocation>
        <location evidence="1">Cytoplasm</location>
    </subcellularLocation>
</comment>
<comment type="similarity">
    <text evidence="1">Belongs to the sugar phosphate cyclases superfamily. Dehydroquinate synthase family.</text>
</comment>
<name>AROB_STRSV</name>
<sequence>MKLNVNLPHHPYDILIKKGSLSQAGSWLSQLWQPQRVVIVTDNRVARLYAEKVKLSLEAAGFETFVFDFLEGEASKNLKTVNKVYEFLVKVGLTRSDGIVALGGGVVGDLAGFAASTYMRGVHFVQIPTSLTAQVDSSIGGKTGVNTPWAKNMVGTFTQPDGVLIDPEVLHTLGQRELIEGMGEVVKYGLIEDKELWDELSEMDGSPESILEHAESIIYHSCDVKRKIVVEDELDNGVRLYLNFGHTIGHAIEATAGYGKVMHGEAVAIGMVQVSRVAEKKGLMPAGITENIIHMCQKFGLPVDYQPWNEAALYQALTHDKKARGNSIKLVLVPELGSASIHQIPLEEMKEFLKK</sequence>
<gene>
    <name evidence="1" type="primary">aroB</name>
    <name type="ordered locus">SSA_1468</name>
</gene>
<accession>A3CNV7</accession>
<feature type="chain" id="PRO_1000094641" description="3-dehydroquinate synthase">
    <location>
        <begin position="1"/>
        <end position="355"/>
    </location>
</feature>
<feature type="binding site" evidence="1">
    <location>
        <begin position="71"/>
        <end position="76"/>
    </location>
    <ligand>
        <name>NAD(+)</name>
        <dbReference type="ChEBI" id="CHEBI:57540"/>
    </ligand>
</feature>
<feature type="binding site" evidence="1">
    <location>
        <begin position="105"/>
        <end position="109"/>
    </location>
    <ligand>
        <name>NAD(+)</name>
        <dbReference type="ChEBI" id="CHEBI:57540"/>
    </ligand>
</feature>
<feature type="binding site" evidence="1">
    <location>
        <begin position="129"/>
        <end position="130"/>
    </location>
    <ligand>
        <name>NAD(+)</name>
        <dbReference type="ChEBI" id="CHEBI:57540"/>
    </ligand>
</feature>
<feature type="binding site" evidence="1">
    <location>
        <position position="142"/>
    </location>
    <ligand>
        <name>NAD(+)</name>
        <dbReference type="ChEBI" id="CHEBI:57540"/>
    </ligand>
</feature>
<feature type="binding site" evidence="1">
    <location>
        <position position="151"/>
    </location>
    <ligand>
        <name>NAD(+)</name>
        <dbReference type="ChEBI" id="CHEBI:57540"/>
    </ligand>
</feature>
<feature type="binding site" evidence="1">
    <location>
        <position position="184"/>
    </location>
    <ligand>
        <name>Zn(2+)</name>
        <dbReference type="ChEBI" id="CHEBI:29105"/>
    </ligand>
</feature>
<feature type="binding site" evidence="1">
    <location>
        <position position="246"/>
    </location>
    <ligand>
        <name>Zn(2+)</name>
        <dbReference type="ChEBI" id="CHEBI:29105"/>
    </ligand>
</feature>
<feature type="binding site" evidence="1">
    <location>
        <position position="263"/>
    </location>
    <ligand>
        <name>Zn(2+)</name>
        <dbReference type="ChEBI" id="CHEBI:29105"/>
    </ligand>
</feature>
<dbReference type="EC" id="4.2.3.4" evidence="1"/>
<dbReference type="EMBL" id="CP000387">
    <property type="protein sequence ID" value="ABN44862.1"/>
    <property type="molecule type" value="Genomic_DNA"/>
</dbReference>
<dbReference type="RefSeq" id="WP_002920829.1">
    <property type="nucleotide sequence ID" value="NC_009009.1"/>
</dbReference>
<dbReference type="RefSeq" id="YP_001035412.1">
    <property type="nucleotide sequence ID" value="NC_009009.1"/>
</dbReference>
<dbReference type="SMR" id="A3CNV7"/>
<dbReference type="STRING" id="388919.SSA_1468"/>
<dbReference type="KEGG" id="ssa:SSA_1468"/>
<dbReference type="PATRIC" id="fig|388919.9.peg.1393"/>
<dbReference type="eggNOG" id="COG0337">
    <property type="taxonomic scope" value="Bacteria"/>
</dbReference>
<dbReference type="HOGENOM" id="CLU_001201_0_1_9"/>
<dbReference type="OrthoDB" id="9806583at2"/>
<dbReference type="UniPathway" id="UPA00053">
    <property type="reaction ID" value="UER00085"/>
</dbReference>
<dbReference type="Proteomes" id="UP000002148">
    <property type="component" value="Chromosome"/>
</dbReference>
<dbReference type="GO" id="GO:0005737">
    <property type="term" value="C:cytoplasm"/>
    <property type="evidence" value="ECO:0007669"/>
    <property type="project" value="UniProtKB-SubCell"/>
</dbReference>
<dbReference type="GO" id="GO:0003856">
    <property type="term" value="F:3-dehydroquinate synthase activity"/>
    <property type="evidence" value="ECO:0007669"/>
    <property type="project" value="UniProtKB-UniRule"/>
</dbReference>
<dbReference type="GO" id="GO:0046872">
    <property type="term" value="F:metal ion binding"/>
    <property type="evidence" value="ECO:0007669"/>
    <property type="project" value="UniProtKB-KW"/>
</dbReference>
<dbReference type="GO" id="GO:0000166">
    <property type="term" value="F:nucleotide binding"/>
    <property type="evidence" value="ECO:0007669"/>
    <property type="project" value="UniProtKB-KW"/>
</dbReference>
<dbReference type="GO" id="GO:0008652">
    <property type="term" value="P:amino acid biosynthetic process"/>
    <property type="evidence" value="ECO:0007669"/>
    <property type="project" value="UniProtKB-KW"/>
</dbReference>
<dbReference type="GO" id="GO:0009073">
    <property type="term" value="P:aromatic amino acid family biosynthetic process"/>
    <property type="evidence" value="ECO:0007669"/>
    <property type="project" value="UniProtKB-KW"/>
</dbReference>
<dbReference type="GO" id="GO:0009423">
    <property type="term" value="P:chorismate biosynthetic process"/>
    <property type="evidence" value="ECO:0007669"/>
    <property type="project" value="UniProtKB-UniRule"/>
</dbReference>
<dbReference type="CDD" id="cd08195">
    <property type="entry name" value="DHQS"/>
    <property type="match status" value="1"/>
</dbReference>
<dbReference type="FunFam" id="3.40.50.1970:FF:000001">
    <property type="entry name" value="3-dehydroquinate synthase"/>
    <property type="match status" value="1"/>
</dbReference>
<dbReference type="Gene3D" id="3.40.50.1970">
    <property type="match status" value="1"/>
</dbReference>
<dbReference type="Gene3D" id="1.20.1090.10">
    <property type="entry name" value="Dehydroquinate synthase-like - alpha domain"/>
    <property type="match status" value="1"/>
</dbReference>
<dbReference type="HAMAP" id="MF_00110">
    <property type="entry name" value="DHQ_synthase"/>
    <property type="match status" value="1"/>
</dbReference>
<dbReference type="InterPro" id="IPR050071">
    <property type="entry name" value="Dehydroquinate_synthase"/>
</dbReference>
<dbReference type="InterPro" id="IPR016037">
    <property type="entry name" value="DHQ_synth_AroB"/>
</dbReference>
<dbReference type="InterPro" id="IPR030963">
    <property type="entry name" value="DHQ_synth_fam"/>
</dbReference>
<dbReference type="InterPro" id="IPR030960">
    <property type="entry name" value="DHQS/DOIS_N"/>
</dbReference>
<dbReference type="InterPro" id="IPR056179">
    <property type="entry name" value="DHQS_C"/>
</dbReference>
<dbReference type="NCBIfam" id="TIGR01357">
    <property type="entry name" value="aroB"/>
    <property type="match status" value="1"/>
</dbReference>
<dbReference type="PANTHER" id="PTHR43622">
    <property type="entry name" value="3-DEHYDROQUINATE SYNTHASE"/>
    <property type="match status" value="1"/>
</dbReference>
<dbReference type="PANTHER" id="PTHR43622:SF7">
    <property type="entry name" value="3-DEHYDROQUINATE SYNTHASE, CHLOROPLASTIC"/>
    <property type="match status" value="1"/>
</dbReference>
<dbReference type="Pfam" id="PF01761">
    <property type="entry name" value="DHQ_synthase"/>
    <property type="match status" value="1"/>
</dbReference>
<dbReference type="Pfam" id="PF24621">
    <property type="entry name" value="DHQS_C"/>
    <property type="match status" value="1"/>
</dbReference>
<dbReference type="PIRSF" id="PIRSF001455">
    <property type="entry name" value="DHQ_synth"/>
    <property type="match status" value="1"/>
</dbReference>
<dbReference type="SUPFAM" id="SSF56796">
    <property type="entry name" value="Dehydroquinate synthase-like"/>
    <property type="match status" value="1"/>
</dbReference>
<evidence type="ECO:0000255" key="1">
    <source>
        <dbReference type="HAMAP-Rule" id="MF_00110"/>
    </source>
</evidence>
<protein>
    <recommendedName>
        <fullName evidence="1">3-dehydroquinate synthase</fullName>
        <shortName evidence="1">DHQS</shortName>
        <ecNumber evidence="1">4.2.3.4</ecNumber>
    </recommendedName>
</protein>
<proteinExistence type="inferred from homology"/>
<keyword id="KW-0028">Amino-acid biosynthesis</keyword>
<keyword id="KW-0057">Aromatic amino acid biosynthesis</keyword>
<keyword id="KW-0170">Cobalt</keyword>
<keyword id="KW-0963">Cytoplasm</keyword>
<keyword id="KW-0456">Lyase</keyword>
<keyword id="KW-0479">Metal-binding</keyword>
<keyword id="KW-0520">NAD</keyword>
<keyword id="KW-0547">Nucleotide-binding</keyword>
<keyword id="KW-1185">Reference proteome</keyword>
<keyword id="KW-0862">Zinc</keyword>
<organism>
    <name type="scientific">Streptococcus sanguinis (strain SK36)</name>
    <dbReference type="NCBI Taxonomy" id="388919"/>
    <lineage>
        <taxon>Bacteria</taxon>
        <taxon>Bacillati</taxon>
        <taxon>Bacillota</taxon>
        <taxon>Bacilli</taxon>
        <taxon>Lactobacillales</taxon>
        <taxon>Streptococcaceae</taxon>
        <taxon>Streptococcus</taxon>
    </lineage>
</organism>
<reference key="1">
    <citation type="journal article" date="2007" name="J. Bacteriol.">
        <title>Genome of the opportunistic pathogen Streptococcus sanguinis.</title>
        <authorList>
            <person name="Xu P."/>
            <person name="Alves J.M."/>
            <person name="Kitten T."/>
            <person name="Brown A."/>
            <person name="Chen Z."/>
            <person name="Ozaki L.S."/>
            <person name="Manque P."/>
            <person name="Ge X."/>
            <person name="Serrano M.G."/>
            <person name="Puiu D."/>
            <person name="Hendricks S."/>
            <person name="Wang Y."/>
            <person name="Chaplin M.D."/>
            <person name="Akan D."/>
            <person name="Paik S."/>
            <person name="Peterson D.L."/>
            <person name="Macrina F.L."/>
            <person name="Buck G.A."/>
        </authorList>
    </citation>
    <scope>NUCLEOTIDE SEQUENCE [LARGE SCALE GENOMIC DNA]</scope>
    <source>
        <strain>SK36</strain>
    </source>
</reference>